<dbReference type="EC" id="2.1.1.-" evidence="1"/>
<dbReference type="EC" id="2.1.1.35" evidence="1"/>
<dbReference type="EMBL" id="CP000083">
    <property type="protein sequence ID" value="AAZ25533.1"/>
    <property type="molecule type" value="Genomic_DNA"/>
</dbReference>
<dbReference type="RefSeq" id="WP_011041209.1">
    <property type="nucleotide sequence ID" value="NC_003910.7"/>
</dbReference>
<dbReference type="SMR" id="Q48A12"/>
<dbReference type="STRING" id="167879.CPS_0336"/>
<dbReference type="KEGG" id="cps:CPS_0336"/>
<dbReference type="eggNOG" id="COG2265">
    <property type="taxonomic scope" value="Bacteria"/>
</dbReference>
<dbReference type="HOGENOM" id="CLU_043022_0_0_6"/>
<dbReference type="Proteomes" id="UP000000547">
    <property type="component" value="Chromosome"/>
</dbReference>
<dbReference type="GO" id="GO:0005829">
    <property type="term" value="C:cytosol"/>
    <property type="evidence" value="ECO:0007669"/>
    <property type="project" value="TreeGrafter"/>
</dbReference>
<dbReference type="GO" id="GO:0019843">
    <property type="term" value="F:rRNA binding"/>
    <property type="evidence" value="ECO:0007669"/>
    <property type="project" value="TreeGrafter"/>
</dbReference>
<dbReference type="GO" id="GO:0030697">
    <property type="term" value="F:tRNA (uracil(54)-C5)-methyltransferase activity, S-adenosyl methionine-dependent"/>
    <property type="evidence" value="ECO:0007669"/>
    <property type="project" value="UniProtKB-UniRule"/>
</dbReference>
<dbReference type="GO" id="GO:0000049">
    <property type="term" value="F:tRNA binding"/>
    <property type="evidence" value="ECO:0007669"/>
    <property type="project" value="TreeGrafter"/>
</dbReference>
<dbReference type="GO" id="GO:0030488">
    <property type="term" value="P:tRNA methylation"/>
    <property type="evidence" value="ECO:0007669"/>
    <property type="project" value="UniProtKB-UniRule"/>
</dbReference>
<dbReference type="CDD" id="cd02440">
    <property type="entry name" value="AdoMet_MTases"/>
    <property type="match status" value="1"/>
</dbReference>
<dbReference type="FunFam" id="2.40.50.1070:FF:000001">
    <property type="entry name" value="tRNA/tmRNA (uracil-C(5))-methyltransferase"/>
    <property type="match status" value="1"/>
</dbReference>
<dbReference type="FunFam" id="3.40.50.150:FF:000012">
    <property type="entry name" value="tRNA/tmRNA (uracil-C(5))-methyltransferase"/>
    <property type="match status" value="1"/>
</dbReference>
<dbReference type="Gene3D" id="2.40.50.1070">
    <property type="match status" value="1"/>
</dbReference>
<dbReference type="Gene3D" id="3.40.50.150">
    <property type="entry name" value="Vaccinia Virus protein VP39"/>
    <property type="match status" value="1"/>
</dbReference>
<dbReference type="HAMAP" id="MF_01011">
    <property type="entry name" value="RNA_methyltr_TrmA"/>
    <property type="match status" value="1"/>
</dbReference>
<dbReference type="InterPro" id="IPR030390">
    <property type="entry name" value="MeTrfase_TrmA_AS"/>
</dbReference>
<dbReference type="InterPro" id="IPR030391">
    <property type="entry name" value="MeTrfase_TrmA_CS"/>
</dbReference>
<dbReference type="InterPro" id="IPR029063">
    <property type="entry name" value="SAM-dependent_MTases_sf"/>
</dbReference>
<dbReference type="InterPro" id="IPR011869">
    <property type="entry name" value="TrmA_MeTrfase"/>
</dbReference>
<dbReference type="InterPro" id="IPR010280">
    <property type="entry name" value="U5_MeTrfase_fam"/>
</dbReference>
<dbReference type="NCBIfam" id="TIGR02143">
    <property type="entry name" value="trmA_only"/>
    <property type="match status" value="1"/>
</dbReference>
<dbReference type="PANTHER" id="PTHR47790">
    <property type="entry name" value="TRNA/TMRNA (URACIL-C(5))-METHYLTRANSFERASE"/>
    <property type="match status" value="1"/>
</dbReference>
<dbReference type="PANTHER" id="PTHR47790:SF2">
    <property type="entry name" value="TRNA_TMRNA (URACIL-C(5))-METHYLTRANSFERASE"/>
    <property type="match status" value="1"/>
</dbReference>
<dbReference type="Pfam" id="PF05958">
    <property type="entry name" value="tRNA_U5-meth_tr"/>
    <property type="match status" value="1"/>
</dbReference>
<dbReference type="SUPFAM" id="SSF53335">
    <property type="entry name" value="S-adenosyl-L-methionine-dependent methyltransferases"/>
    <property type="match status" value="1"/>
</dbReference>
<dbReference type="PROSITE" id="PS51687">
    <property type="entry name" value="SAM_MT_RNA_M5U"/>
    <property type="match status" value="1"/>
</dbReference>
<dbReference type="PROSITE" id="PS01230">
    <property type="entry name" value="TRMA_1"/>
    <property type="match status" value="1"/>
</dbReference>
<dbReference type="PROSITE" id="PS01231">
    <property type="entry name" value="TRMA_2"/>
    <property type="match status" value="1"/>
</dbReference>
<organism>
    <name type="scientific">Colwellia psychrerythraea (strain 34H / ATCC BAA-681)</name>
    <name type="common">Vibrio psychroerythus</name>
    <dbReference type="NCBI Taxonomy" id="167879"/>
    <lineage>
        <taxon>Bacteria</taxon>
        <taxon>Pseudomonadati</taxon>
        <taxon>Pseudomonadota</taxon>
        <taxon>Gammaproteobacteria</taxon>
        <taxon>Alteromonadales</taxon>
        <taxon>Colwelliaceae</taxon>
        <taxon>Colwellia</taxon>
    </lineage>
</organism>
<sequence>MFSHIHPDNYDAQLSKKQQDMAKLFSDFNLPAPDLYPSVPLNYRQRAEFRVWHEGDDLYYIMFDSKTKEKFRVDDFPVASELINNAMKALLATIKDQRELRFKLFQVDFLSTLSGELLISMLYHKPLEDNWQIEAEKLKAQLSTIAPVDIIGRAKKQKIIVDKDYVMESLNVGGKTYVYQQVENSFTQPNAGVNEQMLLWAQQATQNAGGDLIELYCGNGNFSIALAENFERVLGTEISKTSVRSAQINISENGIDNIDIVRMSSEEFSQAMNGERKFRRLEDFDLTTYNYDTVLVDPPRAGLDRDSVELVRRFNKIIYISCNPETLKDNLALLVETHQIDKFALFDQFPYTDHIETGVILTRK</sequence>
<accession>Q48A12</accession>
<evidence type="ECO:0000255" key="1">
    <source>
        <dbReference type="HAMAP-Rule" id="MF_01011"/>
    </source>
</evidence>
<name>TRMA_COLP3</name>
<keyword id="KW-0489">Methyltransferase</keyword>
<keyword id="KW-0949">S-adenosyl-L-methionine</keyword>
<keyword id="KW-0808">Transferase</keyword>
<keyword id="KW-0819">tRNA processing</keyword>
<gene>
    <name evidence="1" type="primary">trmA</name>
    <name type="ordered locus">CPS_0336</name>
</gene>
<feature type="chain" id="PRO_0000281439" description="tRNA/tmRNA (uracil-C(5))-methyltransferase">
    <location>
        <begin position="1"/>
        <end position="364"/>
    </location>
</feature>
<feature type="active site" description="Nucleophile" evidence="1">
    <location>
        <position position="322"/>
    </location>
</feature>
<feature type="active site" description="Proton acceptor" evidence="1">
    <location>
        <position position="356"/>
    </location>
</feature>
<feature type="binding site" evidence="1">
    <location>
        <position position="188"/>
    </location>
    <ligand>
        <name>S-adenosyl-L-methionine</name>
        <dbReference type="ChEBI" id="CHEBI:59789"/>
    </ligand>
</feature>
<feature type="binding site" evidence="1">
    <location>
        <position position="216"/>
    </location>
    <ligand>
        <name>S-adenosyl-L-methionine</name>
        <dbReference type="ChEBI" id="CHEBI:59789"/>
    </ligand>
</feature>
<feature type="binding site" evidence="1">
    <location>
        <position position="221"/>
    </location>
    <ligand>
        <name>S-adenosyl-L-methionine</name>
        <dbReference type="ChEBI" id="CHEBI:59789"/>
    </ligand>
</feature>
<feature type="binding site" evidence="1">
    <location>
        <position position="237"/>
    </location>
    <ligand>
        <name>S-adenosyl-L-methionine</name>
        <dbReference type="ChEBI" id="CHEBI:59789"/>
    </ligand>
</feature>
<feature type="binding site" evidence="1">
    <location>
        <position position="297"/>
    </location>
    <ligand>
        <name>S-adenosyl-L-methionine</name>
        <dbReference type="ChEBI" id="CHEBI:59789"/>
    </ligand>
</feature>
<comment type="function">
    <text evidence="1">Dual-specificity methyltransferase that catalyzes the formation of 5-methyluridine at position 54 (m5U54) in all tRNAs, and that of position 341 (m5U341) in tmRNA (transfer-mRNA).</text>
</comment>
<comment type="catalytic activity">
    <reaction evidence="1">
        <text>uridine(54) in tRNA + S-adenosyl-L-methionine = 5-methyluridine(54) in tRNA + S-adenosyl-L-homocysteine + H(+)</text>
        <dbReference type="Rhea" id="RHEA:42712"/>
        <dbReference type="Rhea" id="RHEA-COMP:10167"/>
        <dbReference type="Rhea" id="RHEA-COMP:10193"/>
        <dbReference type="ChEBI" id="CHEBI:15378"/>
        <dbReference type="ChEBI" id="CHEBI:57856"/>
        <dbReference type="ChEBI" id="CHEBI:59789"/>
        <dbReference type="ChEBI" id="CHEBI:65315"/>
        <dbReference type="ChEBI" id="CHEBI:74447"/>
        <dbReference type="EC" id="2.1.1.35"/>
    </reaction>
</comment>
<comment type="catalytic activity">
    <reaction evidence="1">
        <text>uridine(341) in tmRNA + S-adenosyl-L-methionine = 5-methyluridine(341) in tmRNA + S-adenosyl-L-homocysteine + H(+)</text>
        <dbReference type="Rhea" id="RHEA:43612"/>
        <dbReference type="Rhea" id="RHEA-COMP:10630"/>
        <dbReference type="Rhea" id="RHEA-COMP:10631"/>
        <dbReference type="ChEBI" id="CHEBI:15378"/>
        <dbReference type="ChEBI" id="CHEBI:57856"/>
        <dbReference type="ChEBI" id="CHEBI:59789"/>
        <dbReference type="ChEBI" id="CHEBI:65315"/>
        <dbReference type="ChEBI" id="CHEBI:74447"/>
    </reaction>
</comment>
<comment type="similarity">
    <text evidence="1">Belongs to the class I-like SAM-binding methyltransferase superfamily. RNA M5U methyltransferase family. TrmA subfamily.</text>
</comment>
<reference key="1">
    <citation type="journal article" date="2005" name="Proc. Natl. Acad. Sci. U.S.A.">
        <title>The psychrophilic lifestyle as revealed by the genome sequence of Colwellia psychrerythraea 34H through genomic and proteomic analyses.</title>
        <authorList>
            <person name="Methe B.A."/>
            <person name="Nelson K.E."/>
            <person name="Deming J.W."/>
            <person name="Momen B."/>
            <person name="Melamud E."/>
            <person name="Zhang X."/>
            <person name="Moult J."/>
            <person name="Madupu R."/>
            <person name="Nelson W.C."/>
            <person name="Dodson R.J."/>
            <person name="Brinkac L.M."/>
            <person name="Daugherty S.C."/>
            <person name="Durkin A.S."/>
            <person name="DeBoy R.T."/>
            <person name="Kolonay J.F."/>
            <person name="Sullivan S.A."/>
            <person name="Zhou L."/>
            <person name="Davidsen T.M."/>
            <person name="Wu M."/>
            <person name="Huston A.L."/>
            <person name="Lewis M."/>
            <person name="Weaver B."/>
            <person name="Weidman J.F."/>
            <person name="Khouri H."/>
            <person name="Utterback T.R."/>
            <person name="Feldblyum T.V."/>
            <person name="Fraser C.M."/>
        </authorList>
    </citation>
    <scope>NUCLEOTIDE SEQUENCE [LARGE SCALE GENOMIC DNA]</scope>
    <source>
        <strain>34H / ATCC BAA-681</strain>
    </source>
</reference>
<protein>
    <recommendedName>
        <fullName evidence="1">tRNA/tmRNA (uracil-C(5))-methyltransferase</fullName>
        <ecNumber evidence="1">2.1.1.-</ecNumber>
        <ecNumber evidence="1">2.1.1.35</ecNumber>
    </recommendedName>
    <alternativeName>
        <fullName evidence="1">tRNA (uracil(54)-C(5))-methyltransferase</fullName>
    </alternativeName>
    <alternativeName>
        <fullName evidence="1">tRNA(m5U54)-methyltransferase</fullName>
        <shortName evidence="1">RUMT</shortName>
    </alternativeName>
    <alternativeName>
        <fullName evidence="1">tmRNA (uracil(341)-C(5))-methyltransferase</fullName>
    </alternativeName>
</protein>
<proteinExistence type="inferred from homology"/>